<evidence type="ECO:0000255" key="1">
    <source>
        <dbReference type="HAMAP-Rule" id="MF_01200"/>
    </source>
</evidence>
<keyword id="KW-0210">Decarboxylase</keyword>
<keyword id="KW-0456">Lyase</keyword>
<keyword id="KW-0665">Pyrimidine biosynthesis</keyword>
<feature type="chain" id="PRO_1000065960" description="Orotidine 5'-phosphate decarboxylase">
    <location>
        <begin position="1"/>
        <end position="246"/>
    </location>
</feature>
<feature type="active site" description="Proton donor" evidence="1">
    <location>
        <position position="73"/>
    </location>
</feature>
<feature type="binding site" evidence="1">
    <location>
        <position position="22"/>
    </location>
    <ligand>
        <name>substrate</name>
    </ligand>
</feature>
<feature type="binding site" evidence="1">
    <location>
        <position position="44"/>
    </location>
    <ligand>
        <name>substrate</name>
    </ligand>
</feature>
<feature type="binding site" evidence="1">
    <location>
        <begin position="71"/>
        <end position="80"/>
    </location>
    <ligand>
        <name>substrate</name>
    </ligand>
</feature>
<feature type="binding site" evidence="1">
    <location>
        <position position="131"/>
    </location>
    <ligand>
        <name>substrate</name>
    </ligand>
</feature>
<feature type="binding site" evidence="1">
    <location>
        <position position="192"/>
    </location>
    <ligand>
        <name>substrate</name>
    </ligand>
</feature>
<feature type="binding site" evidence="1">
    <location>
        <position position="201"/>
    </location>
    <ligand>
        <name>substrate</name>
    </ligand>
</feature>
<feature type="binding site" evidence="1">
    <location>
        <position position="221"/>
    </location>
    <ligand>
        <name>substrate</name>
    </ligand>
</feature>
<feature type="binding site" evidence="1">
    <location>
        <position position="222"/>
    </location>
    <ligand>
        <name>substrate</name>
    </ligand>
</feature>
<sequence length="246" mass="26419">MTSATKTNNSGSISSPIVVALDYANKDAALAFADRVNPRDCRLKVGKEMFTLYGPQLVRDLHQRGFEVFLDLKFHDIPNTTARAVAAAAELGVWMVNVHATGGMRMMTAAKEALLPFGQQAPLLIAVTVLTSMDGGDLRDIGINITPAEQAERLAKLTWDCGLDGVVCSAHEAVRLKQVCGEDFKLVTPGIRPEGSDAGDQRRIMTPEQAVAAGVDYMVIGRPITQSPDPEKTLKDILASLCKGAK</sequence>
<accession>A1JM26</accession>
<dbReference type="EC" id="4.1.1.23" evidence="1"/>
<dbReference type="EMBL" id="AM286415">
    <property type="protein sequence ID" value="CAL12052.1"/>
    <property type="molecule type" value="Genomic_DNA"/>
</dbReference>
<dbReference type="RefSeq" id="WP_011816267.1">
    <property type="nucleotide sequence ID" value="NC_008800.1"/>
</dbReference>
<dbReference type="RefSeq" id="YP_001006226.1">
    <property type="nucleotide sequence ID" value="NC_008800.1"/>
</dbReference>
<dbReference type="SMR" id="A1JM26"/>
<dbReference type="KEGG" id="yen:YE1973"/>
<dbReference type="PATRIC" id="fig|393305.7.peg.2133"/>
<dbReference type="eggNOG" id="COG0284">
    <property type="taxonomic scope" value="Bacteria"/>
</dbReference>
<dbReference type="HOGENOM" id="CLU_067069_0_0_6"/>
<dbReference type="OrthoDB" id="9806203at2"/>
<dbReference type="UniPathway" id="UPA00070">
    <property type="reaction ID" value="UER00120"/>
</dbReference>
<dbReference type="Proteomes" id="UP000000642">
    <property type="component" value="Chromosome"/>
</dbReference>
<dbReference type="GO" id="GO:0005829">
    <property type="term" value="C:cytosol"/>
    <property type="evidence" value="ECO:0007669"/>
    <property type="project" value="TreeGrafter"/>
</dbReference>
<dbReference type="GO" id="GO:0004590">
    <property type="term" value="F:orotidine-5'-phosphate decarboxylase activity"/>
    <property type="evidence" value="ECO:0007669"/>
    <property type="project" value="UniProtKB-UniRule"/>
</dbReference>
<dbReference type="GO" id="GO:0006207">
    <property type="term" value="P:'de novo' pyrimidine nucleobase biosynthetic process"/>
    <property type="evidence" value="ECO:0007669"/>
    <property type="project" value="InterPro"/>
</dbReference>
<dbReference type="GO" id="GO:0044205">
    <property type="term" value="P:'de novo' UMP biosynthetic process"/>
    <property type="evidence" value="ECO:0007669"/>
    <property type="project" value="UniProtKB-UniRule"/>
</dbReference>
<dbReference type="CDD" id="cd04725">
    <property type="entry name" value="OMP_decarboxylase_like"/>
    <property type="match status" value="1"/>
</dbReference>
<dbReference type="FunFam" id="3.20.20.70:FF:000015">
    <property type="entry name" value="Orotidine 5'-phosphate decarboxylase"/>
    <property type="match status" value="1"/>
</dbReference>
<dbReference type="Gene3D" id="3.20.20.70">
    <property type="entry name" value="Aldolase class I"/>
    <property type="match status" value="1"/>
</dbReference>
<dbReference type="HAMAP" id="MF_01200_B">
    <property type="entry name" value="OMPdecase_type1_B"/>
    <property type="match status" value="1"/>
</dbReference>
<dbReference type="InterPro" id="IPR013785">
    <property type="entry name" value="Aldolase_TIM"/>
</dbReference>
<dbReference type="InterPro" id="IPR014732">
    <property type="entry name" value="OMPdecase"/>
</dbReference>
<dbReference type="InterPro" id="IPR018089">
    <property type="entry name" value="OMPdecase_AS"/>
</dbReference>
<dbReference type="InterPro" id="IPR047596">
    <property type="entry name" value="OMPdecase_bac"/>
</dbReference>
<dbReference type="InterPro" id="IPR001754">
    <property type="entry name" value="OMPdeCOase_dom"/>
</dbReference>
<dbReference type="InterPro" id="IPR011060">
    <property type="entry name" value="RibuloseP-bd_barrel"/>
</dbReference>
<dbReference type="NCBIfam" id="NF001273">
    <property type="entry name" value="PRK00230.1"/>
    <property type="match status" value="1"/>
</dbReference>
<dbReference type="NCBIfam" id="TIGR01740">
    <property type="entry name" value="pyrF"/>
    <property type="match status" value="1"/>
</dbReference>
<dbReference type="PANTHER" id="PTHR32119">
    <property type="entry name" value="OROTIDINE 5'-PHOSPHATE DECARBOXYLASE"/>
    <property type="match status" value="1"/>
</dbReference>
<dbReference type="PANTHER" id="PTHR32119:SF2">
    <property type="entry name" value="OROTIDINE 5'-PHOSPHATE DECARBOXYLASE"/>
    <property type="match status" value="1"/>
</dbReference>
<dbReference type="Pfam" id="PF00215">
    <property type="entry name" value="OMPdecase"/>
    <property type="match status" value="1"/>
</dbReference>
<dbReference type="SMART" id="SM00934">
    <property type="entry name" value="OMPdecase"/>
    <property type="match status" value="1"/>
</dbReference>
<dbReference type="SUPFAM" id="SSF51366">
    <property type="entry name" value="Ribulose-phoshate binding barrel"/>
    <property type="match status" value="1"/>
</dbReference>
<dbReference type="PROSITE" id="PS00156">
    <property type="entry name" value="OMPDECASE"/>
    <property type="match status" value="1"/>
</dbReference>
<name>PYRF_YERE8</name>
<protein>
    <recommendedName>
        <fullName evidence="1">Orotidine 5'-phosphate decarboxylase</fullName>
        <ecNumber evidence="1">4.1.1.23</ecNumber>
    </recommendedName>
    <alternativeName>
        <fullName evidence="1">OMP decarboxylase</fullName>
        <shortName evidence="1">OMPDCase</shortName>
        <shortName evidence="1">OMPdecase</shortName>
    </alternativeName>
</protein>
<reference key="1">
    <citation type="journal article" date="2006" name="PLoS Genet.">
        <title>The complete genome sequence and comparative genome analysis of the high pathogenicity Yersinia enterocolitica strain 8081.</title>
        <authorList>
            <person name="Thomson N.R."/>
            <person name="Howard S."/>
            <person name="Wren B.W."/>
            <person name="Holden M.T.G."/>
            <person name="Crossman L."/>
            <person name="Challis G.L."/>
            <person name="Churcher C."/>
            <person name="Mungall K."/>
            <person name="Brooks K."/>
            <person name="Chillingworth T."/>
            <person name="Feltwell T."/>
            <person name="Abdellah Z."/>
            <person name="Hauser H."/>
            <person name="Jagels K."/>
            <person name="Maddison M."/>
            <person name="Moule S."/>
            <person name="Sanders M."/>
            <person name="Whitehead S."/>
            <person name="Quail M.A."/>
            <person name="Dougan G."/>
            <person name="Parkhill J."/>
            <person name="Prentice M.B."/>
        </authorList>
    </citation>
    <scope>NUCLEOTIDE SEQUENCE [LARGE SCALE GENOMIC DNA]</scope>
    <source>
        <strain>NCTC 13174 / 8081</strain>
    </source>
</reference>
<comment type="function">
    <text evidence="1">Catalyzes the decarboxylation of orotidine 5'-monophosphate (OMP) to uridine 5'-monophosphate (UMP).</text>
</comment>
<comment type="catalytic activity">
    <reaction evidence="1">
        <text>orotidine 5'-phosphate + H(+) = UMP + CO2</text>
        <dbReference type="Rhea" id="RHEA:11596"/>
        <dbReference type="ChEBI" id="CHEBI:15378"/>
        <dbReference type="ChEBI" id="CHEBI:16526"/>
        <dbReference type="ChEBI" id="CHEBI:57538"/>
        <dbReference type="ChEBI" id="CHEBI:57865"/>
        <dbReference type="EC" id="4.1.1.23"/>
    </reaction>
</comment>
<comment type="pathway">
    <text evidence="1">Pyrimidine metabolism; UMP biosynthesis via de novo pathway; UMP from orotate: step 2/2.</text>
</comment>
<comment type="subunit">
    <text evidence="1">Homodimer.</text>
</comment>
<comment type="similarity">
    <text evidence="1">Belongs to the OMP decarboxylase family. Type 1 subfamily.</text>
</comment>
<gene>
    <name evidence="1" type="primary">pyrF</name>
    <name type="ordered locus">YE1973</name>
</gene>
<organism>
    <name type="scientific">Yersinia enterocolitica serotype O:8 / biotype 1B (strain NCTC 13174 / 8081)</name>
    <dbReference type="NCBI Taxonomy" id="393305"/>
    <lineage>
        <taxon>Bacteria</taxon>
        <taxon>Pseudomonadati</taxon>
        <taxon>Pseudomonadota</taxon>
        <taxon>Gammaproteobacteria</taxon>
        <taxon>Enterobacterales</taxon>
        <taxon>Yersiniaceae</taxon>
        <taxon>Yersinia</taxon>
    </lineage>
</organism>
<proteinExistence type="inferred from homology"/>